<proteinExistence type="evidence at transcript level"/>
<sequence>MTNSKGRSITDKTSGGPSNGGGFVDWTLRLNTIQSDKFLNLLLSMVPVIYQKNQEDRHKKANGIWQDGLSTAVQTFSNRSEQHMEYHSFSEQSFHANNGHASSSCSQKYDDYANYNYCDGRETSETTAMLQDEDVSSDGDEDAIVEVTPKLPKESSGIMALQILVPFLLAGFGTVSAGMVLDIVQHWEVFRKVTEVFILVPALLGLKGNLEMTLASRLSTAVNIGKMDSPIEKWNLIIGNLALKQVQATVVGFLAAVAAIILGWIPEGKYYLDHSILLCSSSVATAFIASLLQGIIMVGVIVGSKKTGINPDNVATPIAASFGDLITLAILAWISQGLYSCLETYYYISPLVGVFFLALTPIWIIIAAKHPATRTVLHSGWEPVITAMVISSIGGLILDTTVSDPNLVGIVVYTPVINGIGGNLVAIQASRISTYLHLHSIPGELPDEPKGCYYPFRTFFGPGVNNKSAQVLLLLVIPGHLIFLYTIHLMKSGHTSLTIIFIVVYLFAAVLQVFTLLWIADWMVHHFWRKGKDPDSFSIPYLTALGDLLGTALLALSFHFLWLIGDRDGDVGD</sequence>
<keyword id="KW-1003">Cell membrane</keyword>
<keyword id="KW-0406">Ion transport</keyword>
<keyword id="KW-0460">Magnesium</keyword>
<keyword id="KW-0472">Membrane</keyword>
<keyword id="KW-0597">Phosphoprotein</keyword>
<keyword id="KW-1185">Reference proteome</keyword>
<keyword id="KW-0677">Repeat</keyword>
<keyword id="KW-0812">Transmembrane</keyword>
<keyword id="KW-1133">Transmembrane helix</keyword>
<keyword id="KW-0813">Transport</keyword>
<comment type="function">
    <text evidence="1">Acts as a plasma-membrane magnesium transporter. Can also mediate the transport of other divalent metal cations in an order of Ba(2+) &gt; Ni(2+) &gt; Co(2+) &gt; Fe(2+) &gt; Mn(2+).</text>
</comment>
<comment type="catalytic activity">
    <reaction evidence="1">
        <text>Mg(2+)(in) = Mg(2+)(out)</text>
        <dbReference type="Rhea" id="RHEA:29827"/>
        <dbReference type="ChEBI" id="CHEBI:18420"/>
    </reaction>
</comment>
<comment type="catalytic activity">
    <reaction evidence="1">
        <text>Mn(2+)(in) = Mn(2+)(out)</text>
        <dbReference type="Rhea" id="RHEA:28699"/>
        <dbReference type="ChEBI" id="CHEBI:29035"/>
    </reaction>
</comment>
<comment type="catalytic activity">
    <reaction evidence="1">
        <text>Co(2+)(in) = Co(2+)(out)</text>
        <dbReference type="Rhea" id="RHEA:28578"/>
        <dbReference type="ChEBI" id="CHEBI:48828"/>
    </reaction>
</comment>
<comment type="catalytic activity">
    <reaction evidence="1">
        <text>Ni(2+)(in) = Ni(2+)(out)</text>
        <dbReference type="Rhea" id="RHEA:29831"/>
        <dbReference type="ChEBI" id="CHEBI:49786"/>
    </reaction>
</comment>
<comment type="catalytic activity">
    <reaction evidence="1">
        <text>Fe(2+)(in) = Fe(2+)(out)</text>
        <dbReference type="Rhea" id="RHEA:28486"/>
        <dbReference type="ChEBI" id="CHEBI:29033"/>
    </reaction>
</comment>
<comment type="subcellular location">
    <subcellularLocation>
        <location evidence="2">Cell membrane</location>
        <topology evidence="3">Multi-pass membrane protein</topology>
    </subcellularLocation>
</comment>
<comment type="similarity">
    <text evidence="4">Belongs to the SLC41A transporter family.</text>
</comment>
<accession>Q4R335</accession>
<dbReference type="EMBL" id="AB179433">
    <property type="protein sequence ID" value="BAE02484.1"/>
    <property type="molecule type" value="mRNA"/>
</dbReference>
<dbReference type="RefSeq" id="NP_001270929.1">
    <property type="nucleotide sequence ID" value="NM_001284000.1"/>
</dbReference>
<dbReference type="STRING" id="9541.ENSMFAP00000000728"/>
<dbReference type="Ensembl" id="ENSMFAT00000028899.2">
    <property type="protein sequence ID" value="ENSMFAP00000000728.2"/>
    <property type="gene ID" value="ENSMFAG00000045731.2"/>
</dbReference>
<dbReference type="eggNOG" id="KOG3788">
    <property type="taxonomic scope" value="Eukaryota"/>
</dbReference>
<dbReference type="GeneTree" id="ENSGT00950000183042"/>
<dbReference type="Proteomes" id="UP000233100">
    <property type="component" value="Chromosome 11"/>
</dbReference>
<dbReference type="Bgee" id="ENSMFAG00000045731">
    <property type="expression patterns" value="Expressed in liver and 11 other cell types or tissues"/>
</dbReference>
<dbReference type="GO" id="GO:0005886">
    <property type="term" value="C:plasma membrane"/>
    <property type="evidence" value="ECO:0007669"/>
    <property type="project" value="UniProtKB-SubCell"/>
</dbReference>
<dbReference type="GO" id="GO:0022890">
    <property type="term" value="F:inorganic cation transmembrane transporter activity"/>
    <property type="evidence" value="ECO:0007669"/>
    <property type="project" value="Ensembl"/>
</dbReference>
<dbReference type="GO" id="GO:0008324">
    <property type="term" value="F:monoatomic cation transmembrane transporter activity"/>
    <property type="evidence" value="ECO:0007669"/>
    <property type="project" value="InterPro"/>
</dbReference>
<dbReference type="GO" id="GO:0006824">
    <property type="term" value="P:cobalt ion transport"/>
    <property type="evidence" value="ECO:0000250"/>
    <property type="project" value="UniProtKB"/>
</dbReference>
<dbReference type="GO" id="GO:0006826">
    <property type="term" value="P:iron ion transport"/>
    <property type="evidence" value="ECO:0000250"/>
    <property type="project" value="UniProtKB"/>
</dbReference>
<dbReference type="GO" id="GO:0015693">
    <property type="term" value="P:magnesium ion transport"/>
    <property type="evidence" value="ECO:0000250"/>
    <property type="project" value="UniProtKB"/>
</dbReference>
<dbReference type="GO" id="GO:0006828">
    <property type="term" value="P:manganese ion transport"/>
    <property type="evidence" value="ECO:0000250"/>
    <property type="project" value="UniProtKB"/>
</dbReference>
<dbReference type="GO" id="GO:0015675">
    <property type="term" value="P:nickel cation transport"/>
    <property type="evidence" value="ECO:0000250"/>
    <property type="project" value="UniProtKB"/>
</dbReference>
<dbReference type="FunFam" id="1.10.357.20:FF:000001">
    <property type="entry name" value="Solute carrier family 41 member 2"/>
    <property type="match status" value="1"/>
</dbReference>
<dbReference type="FunFam" id="1.10.357.20:FF:000002">
    <property type="entry name" value="Solute carrier family 41, member 2"/>
    <property type="match status" value="1"/>
</dbReference>
<dbReference type="Gene3D" id="1.10.357.20">
    <property type="entry name" value="SLC41 divalent cation transporters, integral membrane domain"/>
    <property type="match status" value="2"/>
</dbReference>
<dbReference type="InterPro" id="IPR006667">
    <property type="entry name" value="SLC41_membr_dom"/>
</dbReference>
<dbReference type="InterPro" id="IPR036739">
    <property type="entry name" value="SLC41_membr_dom_sf"/>
</dbReference>
<dbReference type="InterPro" id="IPR045349">
    <property type="entry name" value="SLC41A1-3"/>
</dbReference>
<dbReference type="PANTHER" id="PTHR16228">
    <property type="entry name" value="DIVALENT CATION TRANSPORTER SOLUTE CARRIER FAMILY 41"/>
    <property type="match status" value="1"/>
</dbReference>
<dbReference type="PANTHER" id="PTHR16228:SF25">
    <property type="entry name" value="SOLUTE CARRIER FAMILY 41 MEMBER 2"/>
    <property type="match status" value="1"/>
</dbReference>
<dbReference type="Pfam" id="PF01769">
    <property type="entry name" value="MgtE"/>
    <property type="match status" value="2"/>
</dbReference>
<dbReference type="SUPFAM" id="SSF161093">
    <property type="entry name" value="MgtE membrane domain-like"/>
    <property type="match status" value="2"/>
</dbReference>
<gene>
    <name type="primary">SLC41A2</name>
    <name type="ORF">QtsA-19941</name>
</gene>
<organism>
    <name type="scientific">Macaca fascicularis</name>
    <name type="common">Crab-eating macaque</name>
    <name type="synonym">Cynomolgus monkey</name>
    <dbReference type="NCBI Taxonomy" id="9541"/>
    <lineage>
        <taxon>Eukaryota</taxon>
        <taxon>Metazoa</taxon>
        <taxon>Chordata</taxon>
        <taxon>Craniata</taxon>
        <taxon>Vertebrata</taxon>
        <taxon>Euteleostomi</taxon>
        <taxon>Mammalia</taxon>
        <taxon>Eutheria</taxon>
        <taxon>Euarchontoglires</taxon>
        <taxon>Primates</taxon>
        <taxon>Haplorrhini</taxon>
        <taxon>Catarrhini</taxon>
        <taxon>Cercopithecidae</taxon>
        <taxon>Cercopithecinae</taxon>
        <taxon>Macaca</taxon>
    </lineage>
</organism>
<protein>
    <recommendedName>
        <fullName>Solute carrier family 41 member 2</fullName>
    </recommendedName>
</protein>
<name>S41A2_MACFA</name>
<evidence type="ECO:0000250" key="1">
    <source>
        <dbReference type="UniProtKB" id="Q8BYR8"/>
    </source>
</evidence>
<evidence type="ECO:0000250" key="2">
    <source>
        <dbReference type="UniProtKB" id="Q96JW4"/>
    </source>
</evidence>
<evidence type="ECO:0000255" key="3"/>
<evidence type="ECO:0000305" key="4"/>
<reference key="1">
    <citation type="submission" date="2005-06" db="EMBL/GenBank/DDBJ databases">
        <title>DNA sequences of macaque genes expressed in brain or testis and its evolutionary implications.</title>
        <authorList>
            <consortium name="International consortium for macaque cDNA sequencing and analysis"/>
        </authorList>
    </citation>
    <scope>NUCLEOTIDE SEQUENCE [LARGE SCALE MRNA]</scope>
    <source>
        <tissue>Testis</tissue>
    </source>
</reference>
<feature type="chain" id="PRO_0000295041" description="Solute carrier family 41 member 2">
    <location>
        <begin position="1"/>
        <end position="573"/>
    </location>
</feature>
<feature type="topological domain" description="Extracellular" evidence="2">
    <location>
        <begin position="1"/>
        <end position="162"/>
    </location>
</feature>
<feature type="transmembrane region" description="Helical" evidence="3">
    <location>
        <begin position="163"/>
        <end position="183"/>
    </location>
</feature>
<feature type="topological domain" description="Cytoplasmic" evidence="2">
    <location>
        <begin position="184"/>
        <end position="195"/>
    </location>
</feature>
<feature type="transmembrane region" description="Helical" evidence="3">
    <location>
        <begin position="196"/>
        <end position="216"/>
    </location>
</feature>
<feature type="topological domain" description="Extracellular" evidence="3">
    <location>
        <begin position="217"/>
        <end position="245"/>
    </location>
</feature>
<feature type="transmembrane region" description="Helical" evidence="3">
    <location>
        <begin position="246"/>
        <end position="266"/>
    </location>
</feature>
<feature type="topological domain" description="Cytoplasmic" evidence="2">
    <location>
        <begin position="267"/>
        <end position="282"/>
    </location>
</feature>
<feature type="transmembrane region" description="Helical" evidence="3">
    <location>
        <begin position="283"/>
        <end position="303"/>
    </location>
</feature>
<feature type="topological domain" description="Extracellular" evidence="2">
    <location>
        <begin position="304"/>
        <end position="313"/>
    </location>
</feature>
<feature type="transmembrane region" description="Helical" evidence="3">
    <location>
        <begin position="314"/>
        <end position="334"/>
    </location>
</feature>
<feature type="topological domain" description="Cytoplasmic" evidence="2">
    <location>
        <begin position="335"/>
        <end position="347"/>
    </location>
</feature>
<feature type="transmembrane region" description="Helical" evidence="3">
    <location>
        <begin position="348"/>
        <end position="368"/>
    </location>
</feature>
<feature type="topological domain" description="Extracellular" evidence="2">
    <location>
        <begin position="369"/>
        <end position="376"/>
    </location>
</feature>
<feature type="transmembrane region" description="Helical" evidence="3">
    <location>
        <begin position="377"/>
        <end position="397"/>
    </location>
</feature>
<feature type="topological domain" description="Cytoplasmic" evidence="2">
    <location>
        <begin position="398"/>
        <end position="406"/>
    </location>
</feature>
<feature type="transmembrane region" description="Helical" evidence="3">
    <location>
        <begin position="407"/>
        <end position="427"/>
    </location>
</feature>
<feature type="topological domain" description="Extracellular" evidence="2">
    <location>
        <begin position="428"/>
        <end position="469"/>
    </location>
</feature>
<feature type="transmembrane region" description="Helical" evidence="3">
    <location>
        <begin position="470"/>
        <end position="490"/>
    </location>
</feature>
<feature type="topological domain" description="Cytoplasmic" evidence="2">
    <location>
        <begin position="491"/>
        <end position="498"/>
    </location>
</feature>
<feature type="transmembrane region" description="Helical" evidence="3">
    <location>
        <begin position="499"/>
        <end position="519"/>
    </location>
</feature>
<feature type="topological domain" description="Extracellular" evidence="2">
    <location>
        <begin position="520"/>
        <end position="543"/>
    </location>
</feature>
<feature type="transmembrane region" description="Helical" evidence="3">
    <location>
        <begin position="544"/>
        <end position="564"/>
    </location>
</feature>
<feature type="topological domain" description="Cytoplasmic" evidence="2">
    <location>
        <begin position="565"/>
        <end position="573"/>
    </location>
</feature>
<feature type="modified residue" description="Phosphoserine" evidence="1">
    <location>
        <position position="136"/>
    </location>
</feature>
<feature type="modified residue" description="Phosphoserine" evidence="1">
    <location>
        <position position="137"/>
    </location>
</feature>